<sequence>MNFPDFNNNNKDDQWERFSQLLFYDEEIGFWLDISRMKFSSEDIGSLQDNFKEACKSMKALEKGSIANIDESRQVGHYWLRNASLAPSKQTSNSIRNEINDIKTFGENILNGKITTAQGKPFTDVLWIGIGGSGLGPLLIVNSLQDNNKGLNFSFLDNVDPNGINKTLNSFRDKLSTTLFVVVSKSGGTPEPQIAMDQTRFFLDKNGLDWSSRAVAITMEGSSLDQIAENEKWLKRFDLPDWVGGRTSITASVGLLPLVLIGEDIDSFLDGASQMDQITRRIDIYKNPSALLAASWYFSGAGKGKRDMVVLPYQDRLQVFSKYLQQLVMESLGKEEDRNANKVNQGLAVYGNKGSTDQHAYVQQLRDGIDNFFVTFVEILEDCTEIPKINKKSPGDYLSGFLQGTRLALSENDRQSITITIKKFNSYTLGSLIALFERAVGIYAELIDINAYHQPGVEAGKKAASNILKLQSEIELLLEDGKLYSIEGIMNTIPGSSQESIYIILRHLSNNDHTYKFVGNLSDPRELQIKKAV</sequence>
<organism>
    <name type="scientific">Prochlorococcus marinus (strain SARG / CCMP1375 / SS120)</name>
    <dbReference type="NCBI Taxonomy" id="167539"/>
    <lineage>
        <taxon>Bacteria</taxon>
        <taxon>Bacillati</taxon>
        <taxon>Cyanobacteriota</taxon>
        <taxon>Cyanophyceae</taxon>
        <taxon>Synechococcales</taxon>
        <taxon>Prochlorococcaceae</taxon>
        <taxon>Prochlorococcus</taxon>
    </lineage>
</organism>
<accession>Q7VBZ6</accession>
<dbReference type="EC" id="5.3.1.9" evidence="1"/>
<dbReference type="EMBL" id="AE017126">
    <property type="protein sequence ID" value="AAP99990.1"/>
    <property type="molecule type" value="Genomic_DNA"/>
</dbReference>
<dbReference type="RefSeq" id="NP_875338.1">
    <property type="nucleotide sequence ID" value="NC_005042.1"/>
</dbReference>
<dbReference type="RefSeq" id="WP_011125098.1">
    <property type="nucleotide sequence ID" value="NC_005042.1"/>
</dbReference>
<dbReference type="SMR" id="Q7VBZ6"/>
<dbReference type="STRING" id="167539.Pro_0946"/>
<dbReference type="EnsemblBacteria" id="AAP99990">
    <property type="protein sequence ID" value="AAP99990"/>
    <property type="gene ID" value="Pro_0946"/>
</dbReference>
<dbReference type="KEGG" id="pma:Pro_0946"/>
<dbReference type="PATRIC" id="fig|167539.5.peg.995"/>
<dbReference type="eggNOG" id="COG0166">
    <property type="taxonomic scope" value="Bacteria"/>
</dbReference>
<dbReference type="HOGENOM" id="CLU_033288_0_0_3"/>
<dbReference type="OrthoDB" id="140919at2"/>
<dbReference type="UniPathway" id="UPA00109">
    <property type="reaction ID" value="UER00181"/>
</dbReference>
<dbReference type="UniPathway" id="UPA00138"/>
<dbReference type="Proteomes" id="UP000001420">
    <property type="component" value="Chromosome"/>
</dbReference>
<dbReference type="GO" id="GO:0005829">
    <property type="term" value="C:cytosol"/>
    <property type="evidence" value="ECO:0007669"/>
    <property type="project" value="TreeGrafter"/>
</dbReference>
<dbReference type="GO" id="GO:0097367">
    <property type="term" value="F:carbohydrate derivative binding"/>
    <property type="evidence" value="ECO:0007669"/>
    <property type="project" value="InterPro"/>
</dbReference>
<dbReference type="GO" id="GO:0004347">
    <property type="term" value="F:glucose-6-phosphate isomerase activity"/>
    <property type="evidence" value="ECO:0007669"/>
    <property type="project" value="UniProtKB-UniRule"/>
</dbReference>
<dbReference type="GO" id="GO:0048029">
    <property type="term" value="F:monosaccharide binding"/>
    <property type="evidence" value="ECO:0007669"/>
    <property type="project" value="TreeGrafter"/>
</dbReference>
<dbReference type="GO" id="GO:0006094">
    <property type="term" value="P:gluconeogenesis"/>
    <property type="evidence" value="ECO:0007669"/>
    <property type="project" value="UniProtKB-UniRule"/>
</dbReference>
<dbReference type="GO" id="GO:0051156">
    <property type="term" value="P:glucose 6-phosphate metabolic process"/>
    <property type="evidence" value="ECO:0007669"/>
    <property type="project" value="TreeGrafter"/>
</dbReference>
<dbReference type="GO" id="GO:0006096">
    <property type="term" value="P:glycolytic process"/>
    <property type="evidence" value="ECO:0007669"/>
    <property type="project" value="UniProtKB-UniRule"/>
</dbReference>
<dbReference type="CDD" id="cd05015">
    <property type="entry name" value="SIS_PGI_1"/>
    <property type="match status" value="1"/>
</dbReference>
<dbReference type="CDD" id="cd05016">
    <property type="entry name" value="SIS_PGI_2"/>
    <property type="match status" value="1"/>
</dbReference>
<dbReference type="FunFam" id="3.40.50.10490:FF:000021">
    <property type="entry name" value="Glucose-6-phosphate isomerase"/>
    <property type="match status" value="1"/>
</dbReference>
<dbReference type="Gene3D" id="3.40.50.10490">
    <property type="entry name" value="Glucose-6-phosphate isomerase like protein, domain 1"/>
    <property type="match status" value="2"/>
</dbReference>
<dbReference type="HAMAP" id="MF_00473">
    <property type="entry name" value="G6P_isomerase"/>
    <property type="match status" value="1"/>
</dbReference>
<dbReference type="InterPro" id="IPR001672">
    <property type="entry name" value="G6P_Isomerase"/>
</dbReference>
<dbReference type="InterPro" id="IPR018189">
    <property type="entry name" value="Phosphoglucose_isomerase_CS"/>
</dbReference>
<dbReference type="InterPro" id="IPR046348">
    <property type="entry name" value="SIS_dom_sf"/>
</dbReference>
<dbReference type="InterPro" id="IPR035476">
    <property type="entry name" value="SIS_PGI_1"/>
</dbReference>
<dbReference type="InterPro" id="IPR035482">
    <property type="entry name" value="SIS_PGI_2"/>
</dbReference>
<dbReference type="NCBIfam" id="NF010696">
    <property type="entry name" value="PRK14096.1"/>
    <property type="match status" value="1"/>
</dbReference>
<dbReference type="PANTHER" id="PTHR11469">
    <property type="entry name" value="GLUCOSE-6-PHOSPHATE ISOMERASE"/>
    <property type="match status" value="1"/>
</dbReference>
<dbReference type="PANTHER" id="PTHR11469:SF1">
    <property type="entry name" value="GLUCOSE-6-PHOSPHATE ISOMERASE"/>
    <property type="match status" value="1"/>
</dbReference>
<dbReference type="Pfam" id="PF00342">
    <property type="entry name" value="PGI"/>
    <property type="match status" value="2"/>
</dbReference>
<dbReference type="PRINTS" id="PR00662">
    <property type="entry name" value="G6PISOMERASE"/>
</dbReference>
<dbReference type="SUPFAM" id="SSF53697">
    <property type="entry name" value="SIS domain"/>
    <property type="match status" value="1"/>
</dbReference>
<dbReference type="PROSITE" id="PS00174">
    <property type="entry name" value="P_GLUCOSE_ISOMERASE_2"/>
    <property type="match status" value="1"/>
</dbReference>
<dbReference type="PROSITE" id="PS51463">
    <property type="entry name" value="P_GLUCOSE_ISOMERASE_3"/>
    <property type="match status" value="1"/>
</dbReference>
<proteinExistence type="inferred from homology"/>
<feature type="chain" id="PRO_0000180704" description="Glucose-6-phosphate isomerase">
    <location>
        <begin position="1"/>
        <end position="533"/>
    </location>
</feature>
<feature type="active site" description="Proton donor" evidence="1">
    <location>
        <position position="330"/>
    </location>
</feature>
<feature type="active site" evidence="1">
    <location>
        <position position="359"/>
    </location>
</feature>
<feature type="active site" evidence="1">
    <location>
        <position position="461"/>
    </location>
</feature>
<reference key="1">
    <citation type="journal article" date="2003" name="Proc. Natl. Acad. Sci. U.S.A.">
        <title>Genome sequence of the cyanobacterium Prochlorococcus marinus SS120, a nearly minimal oxyphototrophic genome.</title>
        <authorList>
            <person name="Dufresne A."/>
            <person name="Salanoubat M."/>
            <person name="Partensky F."/>
            <person name="Artiguenave F."/>
            <person name="Axmann I.M."/>
            <person name="Barbe V."/>
            <person name="Duprat S."/>
            <person name="Galperin M.Y."/>
            <person name="Koonin E.V."/>
            <person name="Le Gall F."/>
            <person name="Makarova K.S."/>
            <person name="Ostrowski M."/>
            <person name="Oztas S."/>
            <person name="Robert C."/>
            <person name="Rogozin I.B."/>
            <person name="Scanlan D.J."/>
            <person name="Tandeau de Marsac N."/>
            <person name="Weissenbach J."/>
            <person name="Wincker P."/>
            <person name="Wolf Y.I."/>
            <person name="Hess W.R."/>
        </authorList>
    </citation>
    <scope>NUCLEOTIDE SEQUENCE [LARGE SCALE GENOMIC DNA]</scope>
    <source>
        <strain>SARG / CCMP1375 / SS120</strain>
    </source>
</reference>
<gene>
    <name evidence="1" type="primary">pgi</name>
    <name type="ordered locus">Pro_0946</name>
</gene>
<name>G6PI_PROMA</name>
<protein>
    <recommendedName>
        <fullName evidence="1">Glucose-6-phosphate isomerase</fullName>
        <shortName evidence="1">GPI</shortName>
        <ecNumber evidence="1">5.3.1.9</ecNumber>
    </recommendedName>
    <alternativeName>
        <fullName evidence="1">Phosphoglucose isomerase</fullName>
        <shortName evidence="1">PGI</shortName>
    </alternativeName>
    <alternativeName>
        <fullName evidence="1">Phosphohexose isomerase</fullName>
        <shortName evidence="1">PHI</shortName>
    </alternativeName>
</protein>
<comment type="function">
    <text evidence="1">Catalyzes the reversible isomerization of glucose-6-phosphate to fructose-6-phosphate.</text>
</comment>
<comment type="catalytic activity">
    <reaction evidence="1">
        <text>alpha-D-glucose 6-phosphate = beta-D-fructose 6-phosphate</text>
        <dbReference type="Rhea" id="RHEA:11816"/>
        <dbReference type="ChEBI" id="CHEBI:57634"/>
        <dbReference type="ChEBI" id="CHEBI:58225"/>
        <dbReference type="EC" id="5.3.1.9"/>
    </reaction>
</comment>
<comment type="pathway">
    <text evidence="1">Carbohydrate biosynthesis; gluconeogenesis.</text>
</comment>
<comment type="pathway">
    <text evidence="1">Carbohydrate degradation; glycolysis; D-glyceraldehyde 3-phosphate and glycerone phosphate from D-glucose: step 2/4.</text>
</comment>
<comment type="subcellular location">
    <subcellularLocation>
        <location evidence="1">Cytoplasm</location>
    </subcellularLocation>
</comment>
<comment type="similarity">
    <text evidence="1">Belongs to the GPI family.</text>
</comment>
<evidence type="ECO:0000255" key="1">
    <source>
        <dbReference type="HAMAP-Rule" id="MF_00473"/>
    </source>
</evidence>
<keyword id="KW-0963">Cytoplasm</keyword>
<keyword id="KW-0312">Gluconeogenesis</keyword>
<keyword id="KW-0324">Glycolysis</keyword>
<keyword id="KW-0413">Isomerase</keyword>
<keyword id="KW-1185">Reference proteome</keyword>